<protein>
    <recommendedName>
        <fullName evidence="7">Efflux pump dotC</fullName>
    </recommendedName>
    <alternativeName>
        <fullName evidence="6">Dothistromin biosynthesis protein C</fullName>
    </alternativeName>
</protein>
<accession>M2YI75</accession>
<name>DOTC_DOTSN</name>
<organism>
    <name type="scientific">Dothistroma septosporum (strain NZE10 / CBS 128990)</name>
    <name type="common">Red band needle blight fungus</name>
    <name type="synonym">Mycosphaerella pini</name>
    <dbReference type="NCBI Taxonomy" id="675120"/>
    <lineage>
        <taxon>Eukaryota</taxon>
        <taxon>Fungi</taxon>
        <taxon>Dikarya</taxon>
        <taxon>Ascomycota</taxon>
        <taxon>Pezizomycotina</taxon>
        <taxon>Dothideomycetes</taxon>
        <taxon>Dothideomycetidae</taxon>
        <taxon>Mycosphaerellales</taxon>
        <taxon>Mycosphaerellaceae</taxon>
        <taxon>Dothistroma</taxon>
    </lineage>
</organism>
<proteinExistence type="evidence at transcript level"/>
<comment type="function">
    <text evidence="4 8 9">Efflux pump; part of the gene cluster that mediates the biosynthesis of dothistromin (DOTH), a polyketide toxin very similar in structure to the aflatoxin precursor, versicolorin B (PubMed:12039746, PubMed:17683963). One function of dotC may be to transport early-stage dothistromin biosynthetic intermediates from the cytoplasm into vacuoles, thereby affecting the rate of dothistromin production (PubMed:22069539).</text>
</comment>
<comment type="subcellular location">
    <subcellularLocation>
        <location evidence="4">Cell membrane</location>
        <topology evidence="1">Multi-pass membrane protein</topology>
    </subcellularLocation>
    <subcellularLocation>
        <location evidence="4">Vacuole membrane</location>
        <topology evidence="1">Multi-pass membrane protein</topology>
    </subcellularLocation>
</comment>
<comment type="induction">
    <text evidence="5">Expression is positively regulated by the dothistromin-specific transcription factor aflR (PubMed:23207690).</text>
</comment>
<comment type="disruption phenotype">
    <text evidence="4">Decreases the expression of ver1, pksA and vbsA, and subsequent production of dothistromin, but does not affect the resistance to the toxin (PubMed:22069539).</text>
</comment>
<comment type="similarity">
    <text evidence="7">Belongs to the major facilitator superfamily. TCR/Tet family.</text>
</comment>
<keyword id="KW-1003">Cell membrane</keyword>
<keyword id="KW-0325">Glycoprotein</keyword>
<keyword id="KW-0472">Membrane</keyword>
<keyword id="KW-1185">Reference proteome</keyword>
<keyword id="KW-0812">Transmembrane</keyword>
<keyword id="KW-1133">Transmembrane helix</keyword>
<keyword id="KW-0813">Transport</keyword>
<keyword id="KW-0926">Vacuole</keyword>
<gene>
    <name evidence="6" type="primary">dotC</name>
    <name type="ORF">DOTSEDRAFT_75413</name>
</gene>
<feature type="chain" id="PRO_0000443453" description="Efflux pump dotC">
    <location>
        <begin position="1"/>
        <end position="580"/>
    </location>
</feature>
<feature type="transmembrane region" description="Helical" evidence="1">
    <location>
        <begin position="49"/>
        <end position="69"/>
    </location>
</feature>
<feature type="transmembrane region" description="Helical" evidence="1">
    <location>
        <begin position="89"/>
        <end position="109"/>
    </location>
</feature>
<feature type="transmembrane region" description="Helical" evidence="1">
    <location>
        <begin position="127"/>
        <end position="147"/>
    </location>
</feature>
<feature type="transmembrane region" description="Helical" evidence="1">
    <location>
        <begin position="153"/>
        <end position="173"/>
    </location>
</feature>
<feature type="transmembrane region" description="Helical" evidence="1">
    <location>
        <begin position="181"/>
        <end position="201"/>
    </location>
</feature>
<feature type="transmembrane region" description="Helical" evidence="1">
    <location>
        <begin position="209"/>
        <end position="229"/>
    </location>
</feature>
<feature type="transmembrane region" description="Helical" evidence="1">
    <location>
        <begin position="242"/>
        <end position="262"/>
    </location>
</feature>
<feature type="transmembrane region" description="Helical" evidence="1">
    <location>
        <begin position="275"/>
        <end position="295"/>
    </location>
</feature>
<feature type="transmembrane region" description="Helical" evidence="1">
    <location>
        <begin position="318"/>
        <end position="338"/>
    </location>
</feature>
<feature type="transmembrane region" description="Helical" evidence="1">
    <location>
        <begin position="348"/>
        <end position="368"/>
    </location>
</feature>
<feature type="transmembrane region" description="Helical" evidence="1">
    <location>
        <begin position="380"/>
        <end position="400"/>
    </location>
</feature>
<feature type="transmembrane region" description="Helical" evidence="1">
    <location>
        <begin position="409"/>
        <end position="429"/>
    </location>
</feature>
<feature type="transmembrane region" description="Helical" evidence="1">
    <location>
        <begin position="444"/>
        <end position="466"/>
    </location>
</feature>
<feature type="transmembrane region" description="Helical" evidence="1">
    <location>
        <begin position="519"/>
        <end position="539"/>
    </location>
</feature>
<feature type="region of interest" description="Disordered" evidence="3">
    <location>
        <begin position="1"/>
        <end position="45"/>
    </location>
</feature>
<feature type="region of interest" description="Disordered" evidence="3">
    <location>
        <begin position="559"/>
        <end position="580"/>
    </location>
</feature>
<feature type="compositionally biased region" description="Basic and acidic residues" evidence="3">
    <location>
        <begin position="1"/>
        <end position="34"/>
    </location>
</feature>
<feature type="compositionally biased region" description="Acidic residues" evidence="3">
    <location>
        <begin position="35"/>
        <end position="44"/>
    </location>
</feature>
<feature type="glycosylation site" description="N-linked (GlcNAc...) asparagine" evidence="2">
    <location>
        <position position="10"/>
    </location>
</feature>
<feature type="glycosylation site" description="N-linked (GlcNAc...) asparagine" evidence="2">
    <location>
        <position position="86"/>
    </location>
</feature>
<evidence type="ECO:0000255" key="1"/>
<evidence type="ECO:0000255" key="2">
    <source>
        <dbReference type="PROSITE-ProRule" id="PRU00498"/>
    </source>
</evidence>
<evidence type="ECO:0000256" key="3">
    <source>
        <dbReference type="SAM" id="MobiDB-lite"/>
    </source>
</evidence>
<evidence type="ECO:0000269" key="4">
    <source>
    </source>
</evidence>
<evidence type="ECO:0000269" key="5">
    <source>
    </source>
</evidence>
<evidence type="ECO:0000303" key="6">
    <source>
    </source>
</evidence>
<evidence type="ECO:0000305" key="7"/>
<evidence type="ECO:0000305" key="8">
    <source>
    </source>
</evidence>
<evidence type="ECO:0000305" key="9">
    <source>
    </source>
</evidence>
<sequence length="580" mass="61879">MSEDHTKADNLSEKDPHSPERSDSSSHEDAHAREEEESSDDDGALDGKPASLIAIVMIALSLAVFLSALDTTIVTVALPAISAHFNSTAAYTWVGSAYLLANAASTPIWGKLADIFGRKPMLLLANALFMIGSLVCALSINVGMLITARAIQGAAGGGLLTLVDTIIGDLFSLRTRGTYLGMIGGVWAIACALGPIVGGAFTSSVTWRWCFYINLPIDGLAFGIIFFFLKLKTPKTPILEGFAAIDWAGSFFIIGGTLMFLFGLQYGGITFPWDSATVICLLVFGVVCIVLFGLVEWKFARFPIIPLRLFQYRNNCGALLVAFFHSFVFISAFYYLPLYFQAVKGATPILAGVYILPAVLSTGVSAAATGAFIGNTGNYLIPMYFGMSMMILGYGLLINFDAGSGWAKLIIYQLIAGIGNGPNFQAPLVALQTKIKQSDIATGTATFNFVRNIATAISVVAGQVLYQNQLKKMTSTLQQLGPAASLIAAGDAGANTQAINALPTPQRDLARSAIADALSPMWIMYTAFAAAGLFCILLVSKTELTTTHEVTEVGLEAQKKAEAERKAERQAKDLEKAQKS</sequence>
<dbReference type="EMBL" id="KB446546">
    <property type="protein sequence ID" value="EME38645.1"/>
    <property type="molecule type" value="Genomic_DNA"/>
</dbReference>
<dbReference type="SMR" id="M2YI75"/>
<dbReference type="STRING" id="675120.M2YI75"/>
<dbReference type="GlyCosmos" id="M2YI75">
    <property type="glycosylation" value="2 sites, No reported glycans"/>
</dbReference>
<dbReference type="EnsemblFungi" id="EME38645">
    <property type="protein sequence ID" value="EME38645"/>
    <property type="gene ID" value="DOTSEDRAFT_75413"/>
</dbReference>
<dbReference type="eggNOG" id="KOG0254">
    <property type="taxonomic scope" value="Eukaryota"/>
</dbReference>
<dbReference type="HOGENOM" id="CLU_000960_22_0_1"/>
<dbReference type="OMA" id="GNKKGWL"/>
<dbReference type="OrthoDB" id="10021397at2759"/>
<dbReference type="Proteomes" id="UP000016933">
    <property type="component" value="Unassembled WGS sequence"/>
</dbReference>
<dbReference type="GO" id="GO:0005886">
    <property type="term" value="C:plasma membrane"/>
    <property type="evidence" value="ECO:0007669"/>
    <property type="project" value="UniProtKB-SubCell"/>
</dbReference>
<dbReference type="GO" id="GO:0005774">
    <property type="term" value="C:vacuolar membrane"/>
    <property type="evidence" value="ECO:0007669"/>
    <property type="project" value="UniProtKB-SubCell"/>
</dbReference>
<dbReference type="GO" id="GO:0022857">
    <property type="term" value="F:transmembrane transporter activity"/>
    <property type="evidence" value="ECO:0007669"/>
    <property type="project" value="InterPro"/>
</dbReference>
<dbReference type="CDD" id="cd17502">
    <property type="entry name" value="MFS_Azr1_MDR_like"/>
    <property type="match status" value="1"/>
</dbReference>
<dbReference type="FunFam" id="1.20.1720.10:FF:000014">
    <property type="entry name" value="MFS drug transporter, putative"/>
    <property type="match status" value="1"/>
</dbReference>
<dbReference type="FunFam" id="1.20.1250.20:FF:000196">
    <property type="entry name" value="MFS toxin efflux pump (AflT)"/>
    <property type="match status" value="1"/>
</dbReference>
<dbReference type="Gene3D" id="1.20.1250.20">
    <property type="entry name" value="MFS general substrate transporter like domains"/>
    <property type="match status" value="1"/>
</dbReference>
<dbReference type="Gene3D" id="1.20.1720.10">
    <property type="entry name" value="Multidrug resistance protein D"/>
    <property type="match status" value="1"/>
</dbReference>
<dbReference type="InterPro" id="IPR011701">
    <property type="entry name" value="MFS"/>
</dbReference>
<dbReference type="InterPro" id="IPR020846">
    <property type="entry name" value="MFS_dom"/>
</dbReference>
<dbReference type="InterPro" id="IPR036259">
    <property type="entry name" value="MFS_trans_sf"/>
</dbReference>
<dbReference type="PANTHER" id="PTHR23501:SF102">
    <property type="entry name" value="DRUG TRANSPORTER, PUTATIVE (AFU_ORTHOLOGUE AFUA_3G08530)-RELATED"/>
    <property type="match status" value="1"/>
</dbReference>
<dbReference type="PANTHER" id="PTHR23501">
    <property type="entry name" value="MAJOR FACILITATOR SUPERFAMILY"/>
    <property type="match status" value="1"/>
</dbReference>
<dbReference type="Pfam" id="PF07690">
    <property type="entry name" value="MFS_1"/>
    <property type="match status" value="1"/>
</dbReference>
<dbReference type="PRINTS" id="PR01036">
    <property type="entry name" value="TCRTETB"/>
</dbReference>
<dbReference type="SUPFAM" id="SSF103473">
    <property type="entry name" value="MFS general substrate transporter"/>
    <property type="match status" value="1"/>
</dbReference>
<dbReference type="PROSITE" id="PS50850">
    <property type="entry name" value="MFS"/>
    <property type="match status" value="1"/>
</dbReference>
<reference key="1">
    <citation type="journal article" date="2012" name="PLoS Genet.">
        <title>The genomes of the fungal plant pathogens Cladosporium fulvum and Dothistroma septosporum reveal adaptation to different hosts and lifestyles but also signatures of common ancestry.</title>
        <authorList>
            <person name="de Wit P.J.G.M."/>
            <person name="van der Burgt A."/>
            <person name="Oekmen B."/>
            <person name="Stergiopoulos I."/>
            <person name="Abd-Elsalam K.A."/>
            <person name="Aerts A.L."/>
            <person name="Bahkali A.H."/>
            <person name="Beenen H.G."/>
            <person name="Chettri P."/>
            <person name="Cox M.P."/>
            <person name="Datema E."/>
            <person name="de Vries R.P."/>
            <person name="Dhillon B."/>
            <person name="Ganley A.R."/>
            <person name="Griffiths S.A."/>
            <person name="Guo Y."/>
            <person name="Hamelin R.C."/>
            <person name="Henrissat B."/>
            <person name="Kabir M.S."/>
            <person name="Jashni M.K."/>
            <person name="Kema G."/>
            <person name="Klaubauf S."/>
            <person name="Lapidus A."/>
            <person name="Levasseur A."/>
            <person name="Lindquist E."/>
            <person name="Mehrabi R."/>
            <person name="Ohm R.A."/>
            <person name="Owen T.J."/>
            <person name="Salamov A."/>
            <person name="Schwelm A."/>
            <person name="Schijlen E."/>
            <person name="Sun H."/>
            <person name="van den Burg H.A."/>
            <person name="van Ham R.C.H.J."/>
            <person name="Zhang S."/>
            <person name="Goodwin S.B."/>
            <person name="Grigoriev I.V."/>
            <person name="Collemare J."/>
            <person name="Bradshaw R.E."/>
        </authorList>
    </citation>
    <scope>NUCLEOTIDE SEQUENCE [LARGE SCALE GENOMIC DNA]</scope>
    <source>
        <strain>NZE10 / CBS 128990</strain>
    </source>
</reference>
<reference key="2">
    <citation type="journal article" date="2012" name="PLoS Pathog.">
        <title>Diverse lifestyles and strategies of plant pathogenesis encoded in the genomes of eighteen Dothideomycetes fungi.</title>
        <authorList>
            <person name="Ohm R.A."/>
            <person name="Feau N."/>
            <person name="Henrissat B."/>
            <person name="Schoch C.L."/>
            <person name="Horwitz B.A."/>
            <person name="Barry K.W."/>
            <person name="Condon B.J."/>
            <person name="Copeland A.C."/>
            <person name="Dhillon B."/>
            <person name="Glaser F."/>
            <person name="Hesse C.N."/>
            <person name="Kosti I."/>
            <person name="LaButti K."/>
            <person name="Lindquist E.A."/>
            <person name="Lucas S."/>
            <person name="Salamov A.A."/>
            <person name="Bradshaw R.E."/>
            <person name="Ciuffetti L."/>
            <person name="Hamelin R.C."/>
            <person name="Kema G.H.J."/>
            <person name="Lawrence C."/>
            <person name="Scott J.A."/>
            <person name="Spatafora J.W."/>
            <person name="Turgeon B.G."/>
            <person name="de Wit P.J.G.M."/>
            <person name="Zhong S."/>
            <person name="Goodwin S.B."/>
            <person name="Grigoriev I.V."/>
        </authorList>
    </citation>
    <scope>NUCLEOTIDE SEQUENCE [LARGE SCALE GENOMIC DNA]</scope>
    <source>
        <strain>NZE10 / CBS 128990</strain>
    </source>
</reference>
<reference key="3">
    <citation type="journal article" date="2002" name="Appl. Environ. Microbiol.">
        <title>Dothistroma pini, a forest pathogen, contains homologs of aflatoxin biosynthetic pathway genes.</title>
        <authorList>
            <person name="Bradshaw R.E."/>
            <person name="Bhatnagar D."/>
            <person name="Ganley R.J."/>
            <person name="Gillman C.J."/>
            <person name="Monahan B.J."/>
            <person name="Seconi J.M."/>
        </authorList>
    </citation>
    <scope>FUNCTION</scope>
</reference>
<reference key="4">
    <citation type="journal article" date="2007" name="Fungal Genet. Biol.">
        <title>A fragmented aflatoxin-like gene cluster in the forest pathogen Dothistroma septosporum.</title>
        <authorList>
            <person name="Zhang S."/>
            <person name="Schwelm A."/>
            <person name="Jin H."/>
            <person name="Collins L.J."/>
            <person name="Bradshaw R.E."/>
        </authorList>
    </citation>
    <scope>FUNCTION</scope>
</reference>
<reference key="5">
    <citation type="journal article" date="2009" name="Toxins">
        <title>Functional analysis of a putative dothistromin toxin MFS transporter gene.</title>
        <authorList>
            <person name="Bradshaw R.E."/>
            <person name="Feng Z."/>
            <person name="Schwelm A."/>
            <person name="Yang Y."/>
            <person name="Zhang S."/>
        </authorList>
    </citation>
    <scope>FUNCTION</scope>
    <scope>DISRUPTION PHENOTYPE</scope>
    <scope>SUBCELLULAR LOCATION</scope>
</reference>
<reference key="6">
    <citation type="journal article" date="2013" name="Fungal Genet. Biol.">
        <title>Dothistromin genes at multiple separate loci are regulated by AflR.</title>
        <authorList>
            <person name="Chettri P."/>
            <person name="Ehrlich K.C."/>
            <person name="Cary J.W."/>
            <person name="Collemare J."/>
            <person name="Cox M.P."/>
            <person name="Griffiths S.A."/>
            <person name="Olson M.A."/>
            <person name="de Wit P.J."/>
            <person name="Bradshaw R.E."/>
        </authorList>
    </citation>
    <scope>INDUCTION</scope>
</reference>